<sequence>MEVAAKLSGARISAQKARLVADQIRGKKVGEALNLLAFSSKKAAEIMKKVLESAVANAEHNEGADVDDLKVSTVFVNEGRSLKRIMPRAKGRADRIVKRSCHITVKVADK</sequence>
<name>RL22_PSEF5</name>
<protein>
    <recommendedName>
        <fullName evidence="1">Large ribosomal subunit protein uL22</fullName>
    </recommendedName>
    <alternativeName>
        <fullName evidence="2">50S ribosomal protein L22</fullName>
    </alternativeName>
</protein>
<proteinExistence type="inferred from homology"/>
<evidence type="ECO:0000255" key="1">
    <source>
        <dbReference type="HAMAP-Rule" id="MF_01331"/>
    </source>
</evidence>
<evidence type="ECO:0000305" key="2"/>
<organism>
    <name type="scientific">Pseudomonas fluorescens (strain ATCC BAA-477 / NRRL B-23932 / Pf-5)</name>
    <dbReference type="NCBI Taxonomy" id="220664"/>
    <lineage>
        <taxon>Bacteria</taxon>
        <taxon>Pseudomonadati</taxon>
        <taxon>Pseudomonadota</taxon>
        <taxon>Gammaproteobacteria</taxon>
        <taxon>Pseudomonadales</taxon>
        <taxon>Pseudomonadaceae</taxon>
        <taxon>Pseudomonas</taxon>
    </lineage>
</organism>
<dbReference type="EMBL" id="CP000076">
    <property type="protein sequence ID" value="AAY94782.2"/>
    <property type="molecule type" value="Genomic_DNA"/>
</dbReference>
<dbReference type="RefSeq" id="WP_003103908.1">
    <property type="nucleotide sequence ID" value="NC_004129.6"/>
</dbReference>
<dbReference type="SMR" id="Q4K538"/>
<dbReference type="STRING" id="220664.PFL_5577"/>
<dbReference type="GeneID" id="98636788"/>
<dbReference type="KEGG" id="pfl:PFL_5577"/>
<dbReference type="eggNOG" id="COG0091">
    <property type="taxonomic scope" value="Bacteria"/>
</dbReference>
<dbReference type="HOGENOM" id="CLU_083987_3_3_6"/>
<dbReference type="Proteomes" id="UP000008540">
    <property type="component" value="Chromosome"/>
</dbReference>
<dbReference type="GO" id="GO:0022625">
    <property type="term" value="C:cytosolic large ribosomal subunit"/>
    <property type="evidence" value="ECO:0007669"/>
    <property type="project" value="TreeGrafter"/>
</dbReference>
<dbReference type="GO" id="GO:0019843">
    <property type="term" value="F:rRNA binding"/>
    <property type="evidence" value="ECO:0007669"/>
    <property type="project" value="UniProtKB-UniRule"/>
</dbReference>
<dbReference type="GO" id="GO:0003735">
    <property type="term" value="F:structural constituent of ribosome"/>
    <property type="evidence" value="ECO:0007669"/>
    <property type="project" value="InterPro"/>
</dbReference>
<dbReference type="GO" id="GO:0006412">
    <property type="term" value="P:translation"/>
    <property type="evidence" value="ECO:0007669"/>
    <property type="project" value="UniProtKB-UniRule"/>
</dbReference>
<dbReference type="CDD" id="cd00336">
    <property type="entry name" value="Ribosomal_L22"/>
    <property type="match status" value="1"/>
</dbReference>
<dbReference type="FunFam" id="3.90.470.10:FF:000001">
    <property type="entry name" value="50S ribosomal protein L22"/>
    <property type="match status" value="1"/>
</dbReference>
<dbReference type="Gene3D" id="3.90.470.10">
    <property type="entry name" value="Ribosomal protein L22/L17"/>
    <property type="match status" value="1"/>
</dbReference>
<dbReference type="HAMAP" id="MF_01331_B">
    <property type="entry name" value="Ribosomal_uL22_B"/>
    <property type="match status" value="1"/>
</dbReference>
<dbReference type="InterPro" id="IPR001063">
    <property type="entry name" value="Ribosomal_uL22"/>
</dbReference>
<dbReference type="InterPro" id="IPR005727">
    <property type="entry name" value="Ribosomal_uL22_bac/chlpt-type"/>
</dbReference>
<dbReference type="InterPro" id="IPR047867">
    <property type="entry name" value="Ribosomal_uL22_bac/org-type"/>
</dbReference>
<dbReference type="InterPro" id="IPR018260">
    <property type="entry name" value="Ribosomal_uL22_CS"/>
</dbReference>
<dbReference type="InterPro" id="IPR036394">
    <property type="entry name" value="Ribosomal_uL22_sf"/>
</dbReference>
<dbReference type="NCBIfam" id="TIGR01044">
    <property type="entry name" value="rplV_bact"/>
    <property type="match status" value="1"/>
</dbReference>
<dbReference type="PANTHER" id="PTHR13501">
    <property type="entry name" value="CHLOROPLAST 50S RIBOSOMAL PROTEIN L22-RELATED"/>
    <property type="match status" value="1"/>
</dbReference>
<dbReference type="PANTHER" id="PTHR13501:SF8">
    <property type="entry name" value="LARGE RIBOSOMAL SUBUNIT PROTEIN UL22M"/>
    <property type="match status" value="1"/>
</dbReference>
<dbReference type="Pfam" id="PF00237">
    <property type="entry name" value="Ribosomal_L22"/>
    <property type="match status" value="1"/>
</dbReference>
<dbReference type="SUPFAM" id="SSF54843">
    <property type="entry name" value="Ribosomal protein L22"/>
    <property type="match status" value="1"/>
</dbReference>
<dbReference type="PROSITE" id="PS00464">
    <property type="entry name" value="RIBOSOMAL_L22"/>
    <property type="match status" value="1"/>
</dbReference>
<keyword id="KW-0687">Ribonucleoprotein</keyword>
<keyword id="KW-0689">Ribosomal protein</keyword>
<keyword id="KW-0694">RNA-binding</keyword>
<keyword id="KW-0699">rRNA-binding</keyword>
<accession>Q4K538</accession>
<comment type="function">
    <text evidence="1">This protein binds specifically to 23S rRNA; its binding is stimulated by other ribosomal proteins, e.g. L4, L17, and L20. It is important during the early stages of 50S assembly. It makes multiple contacts with different domains of the 23S rRNA in the assembled 50S subunit and ribosome (By similarity).</text>
</comment>
<comment type="function">
    <text evidence="1">The globular domain of the protein is located near the polypeptide exit tunnel on the outside of the subunit, while an extended beta-hairpin is found that lines the wall of the exit tunnel in the center of the 70S ribosome.</text>
</comment>
<comment type="subunit">
    <text evidence="1">Part of the 50S ribosomal subunit.</text>
</comment>
<comment type="similarity">
    <text evidence="1">Belongs to the universal ribosomal protein uL22 family.</text>
</comment>
<reference key="1">
    <citation type="journal article" date="2005" name="Nat. Biotechnol.">
        <title>Complete genome sequence of the plant commensal Pseudomonas fluorescens Pf-5.</title>
        <authorList>
            <person name="Paulsen I.T."/>
            <person name="Press C.M."/>
            <person name="Ravel J."/>
            <person name="Kobayashi D.Y."/>
            <person name="Myers G.S.A."/>
            <person name="Mavrodi D.V."/>
            <person name="DeBoy R.T."/>
            <person name="Seshadri R."/>
            <person name="Ren Q."/>
            <person name="Madupu R."/>
            <person name="Dodson R.J."/>
            <person name="Durkin A.S."/>
            <person name="Brinkac L.M."/>
            <person name="Daugherty S.C."/>
            <person name="Sullivan S.A."/>
            <person name="Rosovitz M.J."/>
            <person name="Gwinn M.L."/>
            <person name="Zhou L."/>
            <person name="Schneider D.J."/>
            <person name="Cartinhour S.W."/>
            <person name="Nelson W.C."/>
            <person name="Weidman J."/>
            <person name="Watkins K."/>
            <person name="Tran K."/>
            <person name="Khouri H."/>
            <person name="Pierson E.A."/>
            <person name="Pierson L.S. III"/>
            <person name="Thomashow L.S."/>
            <person name="Loper J.E."/>
        </authorList>
    </citation>
    <scope>NUCLEOTIDE SEQUENCE [LARGE SCALE GENOMIC DNA]</scope>
    <source>
        <strain>ATCC BAA-477 / NRRL B-23932 / Pf-5</strain>
    </source>
</reference>
<feature type="chain" id="PRO_0000243185" description="Large ribosomal subunit protein uL22">
    <location>
        <begin position="1"/>
        <end position="110"/>
    </location>
</feature>
<gene>
    <name evidence="1" type="primary">rplV</name>
    <name type="ordered locus">PFL_5577</name>
</gene>